<comment type="function">
    <text evidence="1">Specifically methylates position 2 of adenine 2503 in 23S rRNA and position 2 of adenine 37 in tRNAs. Confers resistance to some classes of antibiotics.</text>
</comment>
<comment type="catalytic activity">
    <reaction evidence="1">
        <text>adenosine(2503) in 23S rRNA + 2 reduced [2Fe-2S]-[ferredoxin] + 2 S-adenosyl-L-methionine = 2-methyladenosine(2503) in 23S rRNA + 5'-deoxyadenosine + L-methionine + 2 oxidized [2Fe-2S]-[ferredoxin] + S-adenosyl-L-homocysteine</text>
        <dbReference type="Rhea" id="RHEA:42916"/>
        <dbReference type="Rhea" id="RHEA-COMP:10000"/>
        <dbReference type="Rhea" id="RHEA-COMP:10001"/>
        <dbReference type="Rhea" id="RHEA-COMP:10152"/>
        <dbReference type="Rhea" id="RHEA-COMP:10282"/>
        <dbReference type="ChEBI" id="CHEBI:17319"/>
        <dbReference type="ChEBI" id="CHEBI:33737"/>
        <dbReference type="ChEBI" id="CHEBI:33738"/>
        <dbReference type="ChEBI" id="CHEBI:57844"/>
        <dbReference type="ChEBI" id="CHEBI:57856"/>
        <dbReference type="ChEBI" id="CHEBI:59789"/>
        <dbReference type="ChEBI" id="CHEBI:74411"/>
        <dbReference type="ChEBI" id="CHEBI:74497"/>
        <dbReference type="EC" id="2.1.1.192"/>
    </reaction>
</comment>
<comment type="catalytic activity">
    <reaction evidence="1">
        <text>adenosine(37) in tRNA + 2 reduced [2Fe-2S]-[ferredoxin] + 2 S-adenosyl-L-methionine = 2-methyladenosine(37) in tRNA + 5'-deoxyadenosine + L-methionine + 2 oxidized [2Fe-2S]-[ferredoxin] + S-adenosyl-L-homocysteine</text>
        <dbReference type="Rhea" id="RHEA:43332"/>
        <dbReference type="Rhea" id="RHEA-COMP:10000"/>
        <dbReference type="Rhea" id="RHEA-COMP:10001"/>
        <dbReference type="Rhea" id="RHEA-COMP:10162"/>
        <dbReference type="Rhea" id="RHEA-COMP:10485"/>
        <dbReference type="ChEBI" id="CHEBI:17319"/>
        <dbReference type="ChEBI" id="CHEBI:33737"/>
        <dbReference type="ChEBI" id="CHEBI:33738"/>
        <dbReference type="ChEBI" id="CHEBI:57844"/>
        <dbReference type="ChEBI" id="CHEBI:57856"/>
        <dbReference type="ChEBI" id="CHEBI:59789"/>
        <dbReference type="ChEBI" id="CHEBI:74411"/>
        <dbReference type="ChEBI" id="CHEBI:74497"/>
        <dbReference type="EC" id="2.1.1.192"/>
    </reaction>
</comment>
<comment type="cofactor">
    <cofactor evidence="1">
        <name>[4Fe-4S] cluster</name>
        <dbReference type="ChEBI" id="CHEBI:49883"/>
    </cofactor>
    <text evidence="1">Binds 1 [4Fe-4S] cluster. The cluster is coordinated with 3 cysteines and an exchangeable S-adenosyl-L-methionine.</text>
</comment>
<comment type="subcellular location">
    <subcellularLocation>
        <location evidence="1">Cytoplasm</location>
    </subcellularLocation>
</comment>
<comment type="miscellaneous">
    <text evidence="1">Reaction proceeds by a ping-pong mechanism involving intermediate methylation of a conserved cysteine residue.</text>
</comment>
<comment type="similarity">
    <text evidence="1">Belongs to the radical SAM superfamily. RlmN family.</text>
</comment>
<organism>
    <name type="scientific">Staphylococcus haemolyticus (strain JCSC1435)</name>
    <dbReference type="NCBI Taxonomy" id="279808"/>
    <lineage>
        <taxon>Bacteria</taxon>
        <taxon>Bacillati</taxon>
        <taxon>Bacillota</taxon>
        <taxon>Bacilli</taxon>
        <taxon>Bacillales</taxon>
        <taxon>Staphylococcaceae</taxon>
        <taxon>Staphylococcus</taxon>
    </lineage>
</organism>
<accession>Q4L5R9</accession>
<proteinExistence type="inferred from homology"/>
<feature type="chain" id="PRO_0000350443" description="Probable dual-specificity RNA methyltransferase RlmN">
    <location>
        <begin position="1"/>
        <end position="364"/>
    </location>
</feature>
<feature type="domain" description="Radical SAM core" evidence="2">
    <location>
        <begin position="113"/>
        <end position="346"/>
    </location>
</feature>
<feature type="active site" description="Proton acceptor" evidence="1">
    <location>
        <position position="107"/>
    </location>
</feature>
<feature type="active site" description="S-methylcysteine intermediate" evidence="1">
    <location>
        <position position="351"/>
    </location>
</feature>
<feature type="binding site" evidence="1">
    <location>
        <position position="127"/>
    </location>
    <ligand>
        <name>[4Fe-4S] cluster</name>
        <dbReference type="ChEBI" id="CHEBI:49883"/>
        <note>4Fe-4S-S-AdoMet</note>
    </ligand>
</feature>
<feature type="binding site" evidence="1">
    <location>
        <position position="131"/>
    </location>
    <ligand>
        <name>[4Fe-4S] cluster</name>
        <dbReference type="ChEBI" id="CHEBI:49883"/>
        <note>4Fe-4S-S-AdoMet</note>
    </ligand>
</feature>
<feature type="binding site" evidence="1">
    <location>
        <position position="134"/>
    </location>
    <ligand>
        <name>[4Fe-4S] cluster</name>
        <dbReference type="ChEBI" id="CHEBI:49883"/>
        <note>4Fe-4S-S-AdoMet</note>
    </ligand>
</feature>
<feature type="binding site" evidence="1">
    <location>
        <begin position="177"/>
        <end position="178"/>
    </location>
    <ligand>
        <name>S-adenosyl-L-methionine</name>
        <dbReference type="ChEBI" id="CHEBI:59789"/>
    </ligand>
</feature>
<feature type="binding site" evidence="1">
    <location>
        <position position="209"/>
    </location>
    <ligand>
        <name>S-adenosyl-L-methionine</name>
        <dbReference type="ChEBI" id="CHEBI:59789"/>
    </ligand>
</feature>
<feature type="binding site" evidence="1">
    <location>
        <begin position="232"/>
        <end position="234"/>
    </location>
    <ligand>
        <name>S-adenosyl-L-methionine</name>
        <dbReference type="ChEBI" id="CHEBI:59789"/>
    </ligand>
</feature>
<feature type="binding site" evidence="1">
    <location>
        <position position="308"/>
    </location>
    <ligand>
        <name>S-adenosyl-L-methionine</name>
        <dbReference type="ChEBI" id="CHEBI:59789"/>
    </ligand>
</feature>
<feature type="disulfide bond" description="(transient)" evidence="1">
    <location>
        <begin position="120"/>
        <end position="351"/>
    </location>
</feature>
<dbReference type="EC" id="2.1.1.192" evidence="1"/>
<dbReference type="EMBL" id="AP006716">
    <property type="protein sequence ID" value="BAE05006.1"/>
    <property type="molecule type" value="Genomic_DNA"/>
</dbReference>
<dbReference type="RefSeq" id="WP_011275982.1">
    <property type="nucleotide sequence ID" value="NC_007168.1"/>
</dbReference>
<dbReference type="SMR" id="Q4L5R9"/>
<dbReference type="GeneID" id="93781075"/>
<dbReference type="KEGG" id="sha:SH1697"/>
<dbReference type="eggNOG" id="COG0820">
    <property type="taxonomic scope" value="Bacteria"/>
</dbReference>
<dbReference type="HOGENOM" id="CLU_029101_0_1_9"/>
<dbReference type="OrthoDB" id="9793973at2"/>
<dbReference type="Proteomes" id="UP000000543">
    <property type="component" value="Chromosome"/>
</dbReference>
<dbReference type="GO" id="GO:0005737">
    <property type="term" value="C:cytoplasm"/>
    <property type="evidence" value="ECO:0007669"/>
    <property type="project" value="UniProtKB-SubCell"/>
</dbReference>
<dbReference type="GO" id="GO:0051539">
    <property type="term" value="F:4 iron, 4 sulfur cluster binding"/>
    <property type="evidence" value="ECO:0007669"/>
    <property type="project" value="UniProtKB-UniRule"/>
</dbReference>
<dbReference type="GO" id="GO:0046872">
    <property type="term" value="F:metal ion binding"/>
    <property type="evidence" value="ECO:0007669"/>
    <property type="project" value="UniProtKB-KW"/>
</dbReference>
<dbReference type="GO" id="GO:0070040">
    <property type="term" value="F:rRNA (adenine(2503)-C2-)-methyltransferase activity"/>
    <property type="evidence" value="ECO:0007669"/>
    <property type="project" value="UniProtKB-UniRule"/>
</dbReference>
<dbReference type="GO" id="GO:0019843">
    <property type="term" value="F:rRNA binding"/>
    <property type="evidence" value="ECO:0007669"/>
    <property type="project" value="UniProtKB-UniRule"/>
</dbReference>
<dbReference type="GO" id="GO:0002935">
    <property type="term" value="F:tRNA (adenine(37)-C2)-methyltransferase activity"/>
    <property type="evidence" value="ECO:0007669"/>
    <property type="project" value="UniProtKB-UniRule"/>
</dbReference>
<dbReference type="GO" id="GO:0000049">
    <property type="term" value="F:tRNA binding"/>
    <property type="evidence" value="ECO:0007669"/>
    <property type="project" value="UniProtKB-UniRule"/>
</dbReference>
<dbReference type="GO" id="GO:0046677">
    <property type="term" value="P:response to antibiotic"/>
    <property type="evidence" value="ECO:0007669"/>
    <property type="project" value="UniProtKB-KW"/>
</dbReference>
<dbReference type="GO" id="GO:0070475">
    <property type="term" value="P:rRNA base methylation"/>
    <property type="evidence" value="ECO:0007669"/>
    <property type="project" value="UniProtKB-UniRule"/>
</dbReference>
<dbReference type="GO" id="GO:0030488">
    <property type="term" value="P:tRNA methylation"/>
    <property type="evidence" value="ECO:0007669"/>
    <property type="project" value="UniProtKB-UniRule"/>
</dbReference>
<dbReference type="CDD" id="cd01335">
    <property type="entry name" value="Radical_SAM"/>
    <property type="match status" value="1"/>
</dbReference>
<dbReference type="FunFam" id="1.10.150.530:FF:000002">
    <property type="entry name" value="Probable dual-specificity RNA methyltransferase RlmN"/>
    <property type="match status" value="1"/>
</dbReference>
<dbReference type="FunFam" id="3.20.20.70:FF:000014">
    <property type="entry name" value="Probable dual-specificity RNA methyltransferase RlmN"/>
    <property type="match status" value="1"/>
</dbReference>
<dbReference type="Gene3D" id="1.10.150.530">
    <property type="match status" value="1"/>
</dbReference>
<dbReference type="Gene3D" id="3.20.20.70">
    <property type="entry name" value="Aldolase class I"/>
    <property type="match status" value="1"/>
</dbReference>
<dbReference type="HAMAP" id="MF_01849">
    <property type="entry name" value="RNA_methyltr_RlmN"/>
    <property type="match status" value="1"/>
</dbReference>
<dbReference type="InterPro" id="IPR013785">
    <property type="entry name" value="Aldolase_TIM"/>
</dbReference>
<dbReference type="InterPro" id="IPR040072">
    <property type="entry name" value="Methyltransferase_A"/>
</dbReference>
<dbReference type="InterPro" id="IPR048641">
    <property type="entry name" value="RlmN_N"/>
</dbReference>
<dbReference type="InterPro" id="IPR027492">
    <property type="entry name" value="RNA_MTrfase_RlmN"/>
</dbReference>
<dbReference type="InterPro" id="IPR004383">
    <property type="entry name" value="rRNA_lsu_MTrfase_RlmN/Cfr"/>
</dbReference>
<dbReference type="InterPro" id="IPR007197">
    <property type="entry name" value="rSAM"/>
</dbReference>
<dbReference type="NCBIfam" id="TIGR00048">
    <property type="entry name" value="rRNA_mod_RlmN"/>
    <property type="match status" value="1"/>
</dbReference>
<dbReference type="PANTHER" id="PTHR30544">
    <property type="entry name" value="23S RRNA METHYLTRANSFERASE"/>
    <property type="match status" value="1"/>
</dbReference>
<dbReference type="PANTHER" id="PTHR30544:SF5">
    <property type="entry name" value="RADICAL SAM CORE DOMAIN-CONTAINING PROTEIN"/>
    <property type="match status" value="1"/>
</dbReference>
<dbReference type="Pfam" id="PF04055">
    <property type="entry name" value="Radical_SAM"/>
    <property type="match status" value="1"/>
</dbReference>
<dbReference type="Pfam" id="PF21016">
    <property type="entry name" value="RlmN_N"/>
    <property type="match status" value="1"/>
</dbReference>
<dbReference type="PIRSF" id="PIRSF006004">
    <property type="entry name" value="CHP00048"/>
    <property type="match status" value="1"/>
</dbReference>
<dbReference type="SFLD" id="SFLDF00275">
    <property type="entry name" value="adenosine_C2_methyltransferase"/>
    <property type="match status" value="1"/>
</dbReference>
<dbReference type="SFLD" id="SFLDS00029">
    <property type="entry name" value="Radical_SAM"/>
    <property type="match status" value="1"/>
</dbReference>
<dbReference type="SUPFAM" id="SSF102114">
    <property type="entry name" value="Radical SAM enzymes"/>
    <property type="match status" value="1"/>
</dbReference>
<dbReference type="PROSITE" id="PS51918">
    <property type="entry name" value="RADICAL_SAM"/>
    <property type="match status" value="1"/>
</dbReference>
<evidence type="ECO:0000255" key="1">
    <source>
        <dbReference type="HAMAP-Rule" id="MF_01849"/>
    </source>
</evidence>
<evidence type="ECO:0000255" key="2">
    <source>
        <dbReference type="PROSITE-ProRule" id="PRU01266"/>
    </source>
</evidence>
<sequence length="364" mass="42048">MITTEKKKKNKFLPDFEKQSIYSLRYDEMQEWLVEHGQQKFRAKQIFEWLYQKRVDSIDDMTNLSKDLRQVLKDNFAMTTLTTVVKQESKDGTIKFLFELQDGYTIETVLMRHDYGNSVCVTTQVGCRIGCTFCASTLGGLKRNLEAGEIVSQVLTVQKALDATDERVSQIVIMGIGEPFENYDEMMDFLRIVNDDNSLNIGARHITVSTSGIIPRIYDFAEEDIQINFAVSLHAAKDEIRSKLMPINRAYHVDKLMEAIKYYQEKTNRRVTFEYGLFGGVNDQLEHARDLAHLIKDLNCHVNLIPVNHVPERNYVKTPKDDIFKFEKELKRLGINATIRREQGSDIDAACGQLRAKERQVETR</sequence>
<reference key="1">
    <citation type="journal article" date="2005" name="J. Bacteriol.">
        <title>Whole-genome sequencing of Staphylococcus haemolyticus uncovers the extreme plasticity of its genome and the evolution of human-colonizing staphylococcal species.</title>
        <authorList>
            <person name="Takeuchi F."/>
            <person name="Watanabe S."/>
            <person name="Baba T."/>
            <person name="Yuzawa H."/>
            <person name="Ito T."/>
            <person name="Morimoto Y."/>
            <person name="Kuroda M."/>
            <person name="Cui L."/>
            <person name="Takahashi M."/>
            <person name="Ankai A."/>
            <person name="Baba S."/>
            <person name="Fukui S."/>
            <person name="Lee J.C."/>
            <person name="Hiramatsu K."/>
        </authorList>
    </citation>
    <scope>NUCLEOTIDE SEQUENCE [LARGE SCALE GENOMIC DNA]</scope>
    <source>
        <strain>JCSC1435</strain>
    </source>
</reference>
<name>RLMN_STAHJ</name>
<protein>
    <recommendedName>
        <fullName evidence="1">Probable dual-specificity RNA methyltransferase RlmN</fullName>
        <ecNumber evidence="1">2.1.1.192</ecNumber>
    </recommendedName>
    <alternativeName>
        <fullName evidence="1">23S rRNA (adenine(2503)-C(2))-methyltransferase</fullName>
    </alternativeName>
    <alternativeName>
        <fullName evidence="1">23S rRNA m2A2503 methyltransferase</fullName>
    </alternativeName>
    <alternativeName>
        <fullName evidence="1">Ribosomal RNA large subunit methyltransferase N</fullName>
    </alternativeName>
    <alternativeName>
        <fullName evidence="1">tRNA (adenine(37)-C(2))-methyltransferase</fullName>
    </alternativeName>
    <alternativeName>
        <fullName evidence="1">tRNA m2A37 methyltransferase</fullName>
    </alternativeName>
</protein>
<keyword id="KW-0004">4Fe-4S</keyword>
<keyword id="KW-0046">Antibiotic resistance</keyword>
<keyword id="KW-0963">Cytoplasm</keyword>
<keyword id="KW-1015">Disulfide bond</keyword>
<keyword id="KW-0408">Iron</keyword>
<keyword id="KW-0411">Iron-sulfur</keyword>
<keyword id="KW-0479">Metal-binding</keyword>
<keyword id="KW-0489">Methyltransferase</keyword>
<keyword id="KW-0698">rRNA processing</keyword>
<keyword id="KW-0949">S-adenosyl-L-methionine</keyword>
<keyword id="KW-0808">Transferase</keyword>
<keyword id="KW-0819">tRNA processing</keyword>
<gene>
    <name evidence="1" type="primary">rlmN</name>
    <name type="ordered locus">SH1697</name>
</gene>